<dbReference type="EC" id="2.7.7.3" evidence="1"/>
<dbReference type="EMBL" id="CP000352">
    <property type="protein sequence ID" value="ABF07171.1"/>
    <property type="molecule type" value="Genomic_DNA"/>
</dbReference>
<dbReference type="RefSeq" id="WP_011515175.1">
    <property type="nucleotide sequence ID" value="NC_007973.1"/>
</dbReference>
<dbReference type="SMR" id="Q1LRQ5"/>
<dbReference type="STRING" id="266264.Rmet_0285"/>
<dbReference type="GeneID" id="92819197"/>
<dbReference type="KEGG" id="rme:Rmet_0285"/>
<dbReference type="eggNOG" id="COG0669">
    <property type="taxonomic scope" value="Bacteria"/>
</dbReference>
<dbReference type="HOGENOM" id="CLU_100149_0_1_4"/>
<dbReference type="UniPathway" id="UPA00241">
    <property type="reaction ID" value="UER00355"/>
</dbReference>
<dbReference type="Proteomes" id="UP000002429">
    <property type="component" value="Chromosome"/>
</dbReference>
<dbReference type="GO" id="GO:0005737">
    <property type="term" value="C:cytoplasm"/>
    <property type="evidence" value="ECO:0007669"/>
    <property type="project" value="UniProtKB-SubCell"/>
</dbReference>
<dbReference type="GO" id="GO:0005524">
    <property type="term" value="F:ATP binding"/>
    <property type="evidence" value="ECO:0007669"/>
    <property type="project" value="UniProtKB-KW"/>
</dbReference>
<dbReference type="GO" id="GO:0004595">
    <property type="term" value="F:pantetheine-phosphate adenylyltransferase activity"/>
    <property type="evidence" value="ECO:0007669"/>
    <property type="project" value="UniProtKB-UniRule"/>
</dbReference>
<dbReference type="GO" id="GO:0015937">
    <property type="term" value="P:coenzyme A biosynthetic process"/>
    <property type="evidence" value="ECO:0007669"/>
    <property type="project" value="UniProtKB-UniRule"/>
</dbReference>
<dbReference type="CDD" id="cd02163">
    <property type="entry name" value="PPAT"/>
    <property type="match status" value="1"/>
</dbReference>
<dbReference type="Gene3D" id="3.40.50.620">
    <property type="entry name" value="HUPs"/>
    <property type="match status" value="1"/>
</dbReference>
<dbReference type="HAMAP" id="MF_00151">
    <property type="entry name" value="PPAT_bact"/>
    <property type="match status" value="1"/>
</dbReference>
<dbReference type="InterPro" id="IPR004821">
    <property type="entry name" value="Cyt_trans-like"/>
</dbReference>
<dbReference type="InterPro" id="IPR001980">
    <property type="entry name" value="PPAT"/>
</dbReference>
<dbReference type="InterPro" id="IPR014729">
    <property type="entry name" value="Rossmann-like_a/b/a_fold"/>
</dbReference>
<dbReference type="NCBIfam" id="TIGR01510">
    <property type="entry name" value="coaD_prev_kdtB"/>
    <property type="match status" value="1"/>
</dbReference>
<dbReference type="NCBIfam" id="TIGR00125">
    <property type="entry name" value="cyt_tran_rel"/>
    <property type="match status" value="1"/>
</dbReference>
<dbReference type="PANTHER" id="PTHR21342">
    <property type="entry name" value="PHOSPHOPANTETHEINE ADENYLYLTRANSFERASE"/>
    <property type="match status" value="1"/>
</dbReference>
<dbReference type="PANTHER" id="PTHR21342:SF1">
    <property type="entry name" value="PHOSPHOPANTETHEINE ADENYLYLTRANSFERASE"/>
    <property type="match status" value="1"/>
</dbReference>
<dbReference type="Pfam" id="PF01467">
    <property type="entry name" value="CTP_transf_like"/>
    <property type="match status" value="1"/>
</dbReference>
<dbReference type="PRINTS" id="PR01020">
    <property type="entry name" value="LPSBIOSNTHSS"/>
</dbReference>
<dbReference type="SUPFAM" id="SSF52374">
    <property type="entry name" value="Nucleotidylyl transferase"/>
    <property type="match status" value="1"/>
</dbReference>
<protein>
    <recommendedName>
        <fullName evidence="1">Phosphopantetheine adenylyltransferase</fullName>
        <ecNumber evidence="1">2.7.7.3</ecNumber>
    </recommendedName>
    <alternativeName>
        <fullName evidence="1">Dephospho-CoA pyrophosphorylase</fullName>
    </alternativeName>
    <alternativeName>
        <fullName evidence="1">Pantetheine-phosphate adenylyltransferase</fullName>
        <shortName evidence="1">PPAT</shortName>
    </alternativeName>
</protein>
<reference key="1">
    <citation type="journal article" date="2010" name="PLoS ONE">
        <title>The complete genome sequence of Cupriavidus metallidurans strain CH34, a master survivalist in harsh and anthropogenic environments.</title>
        <authorList>
            <person name="Janssen P.J."/>
            <person name="Van Houdt R."/>
            <person name="Moors H."/>
            <person name="Monsieurs P."/>
            <person name="Morin N."/>
            <person name="Michaux A."/>
            <person name="Benotmane M.A."/>
            <person name="Leys N."/>
            <person name="Vallaeys T."/>
            <person name="Lapidus A."/>
            <person name="Monchy S."/>
            <person name="Medigue C."/>
            <person name="Taghavi S."/>
            <person name="McCorkle S."/>
            <person name="Dunn J."/>
            <person name="van der Lelie D."/>
            <person name="Mergeay M."/>
        </authorList>
    </citation>
    <scope>NUCLEOTIDE SEQUENCE [LARGE SCALE GENOMIC DNA]</scope>
    <source>
        <strain>ATCC 43123 / DSM 2839 / NBRC 102507 / CH34</strain>
    </source>
</reference>
<proteinExistence type="inferred from homology"/>
<keyword id="KW-0067">ATP-binding</keyword>
<keyword id="KW-0173">Coenzyme A biosynthesis</keyword>
<keyword id="KW-0963">Cytoplasm</keyword>
<keyword id="KW-0460">Magnesium</keyword>
<keyword id="KW-0547">Nucleotide-binding</keyword>
<keyword id="KW-0548">Nucleotidyltransferase</keyword>
<keyword id="KW-1185">Reference proteome</keyword>
<keyword id="KW-0808">Transferase</keyword>
<name>COAD_CUPMC</name>
<comment type="function">
    <text evidence="1">Reversibly transfers an adenylyl group from ATP to 4'-phosphopantetheine, yielding dephospho-CoA (dPCoA) and pyrophosphate.</text>
</comment>
<comment type="catalytic activity">
    <reaction evidence="1">
        <text>(R)-4'-phosphopantetheine + ATP + H(+) = 3'-dephospho-CoA + diphosphate</text>
        <dbReference type="Rhea" id="RHEA:19801"/>
        <dbReference type="ChEBI" id="CHEBI:15378"/>
        <dbReference type="ChEBI" id="CHEBI:30616"/>
        <dbReference type="ChEBI" id="CHEBI:33019"/>
        <dbReference type="ChEBI" id="CHEBI:57328"/>
        <dbReference type="ChEBI" id="CHEBI:61723"/>
        <dbReference type="EC" id="2.7.7.3"/>
    </reaction>
</comment>
<comment type="cofactor">
    <cofactor evidence="1">
        <name>Mg(2+)</name>
        <dbReference type="ChEBI" id="CHEBI:18420"/>
    </cofactor>
</comment>
<comment type="pathway">
    <text evidence="1">Cofactor biosynthesis; coenzyme A biosynthesis; CoA from (R)-pantothenate: step 4/5.</text>
</comment>
<comment type="subunit">
    <text evidence="1">Homohexamer.</text>
</comment>
<comment type="subcellular location">
    <subcellularLocation>
        <location evidence="1">Cytoplasm</location>
    </subcellularLocation>
</comment>
<comment type="similarity">
    <text evidence="1">Belongs to the bacterial CoaD family.</text>
</comment>
<organism>
    <name type="scientific">Cupriavidus metallidurans (strain ATCC 43123 / DSM 2839 / NBRC 102507 / CH34)</name>
    <name type="common">Ralstonia metallidurans</name>
    <dbReference type="NCBI Taxonomy" id="266264"/>
    <lineage>
        <taxon>Bacteria</taxon>
        <taxon>Pseudomonadati</taxon>
        <taxon>Pseudomonadota</taxon>
        <taxon>Betaproteobacteria</taxon>
        <taxon>Burkholderiales</taxon>
        <taxon>Burkholderiaceae</taxon>
        <taxon>Cupriavidus</taxon>
    </lineage>
</organism>
<accession>Q1LRQ5</accession>
<evidence type="ECO:0000255" key="1">
    <source>
        <dbReference type="HAMAP-Rule" id="MF_00151"/>
    </source>
</evidence>
<sequence>MVVAVYPGTFDPMTRGHEDLVRRASNIFDELVVGVAHSPNKRPFFSLEERIGIAREVLGHYPNVRVEGFSGLLKDFVRKNNARVIVRGLRAVSDFEYEFQMAGMNRYLLPDVETMFLTPSDQYQFISGTFVREIAVLGGDVSKFVFPSVERWLQEKIGKAE</sequence>
<feature type="chain" id="PRO_1000011215" description="Phosphopantetheine adenylyltransferase">
    <location>
        <begin position="1"/>
        <end position="161"/>
    </location>
</feature>
<feature type="binding site" evidence="1">
    <location>
        <begin position="9"/>
        <end position="10"/>
    </location>
    <ligand>
        <name>ATP</name>
        <dbReference type="ChEBI" id="CHEBI:30616"/>
    </ligand>
</feature>
<feature type="binding site" evidence="1">
    <location>
        <position position="9"/>
    </location>
    <ligand>
        <name>substrate</name>
    </ligand>
</feature>
<feature type="binding site" evidence="1">
    <location>
        <position position="17"/>
    </location>
    <ligand>
        <name>ATP</name>
        <dbReference type="ChEBI" id="CHEBI:30616"/>
    </ligand>
</feature>
<feature type="binding site" evidence="1">
    <location>
        <position position="41"/>
    </location>
    <ligand>
        <name>substrate</name>
    </ligand>
</feature>
<feature type="binding site" evidence="1">
    <location>
        <position position="73"/>
    </location>
    <ligand>
        <name>substrate</name>
    </ligand>
</feature>
<feature type="binding site" evidence="1">
    <location>
        <position position="87"/>
    </location>
    <ligand>
        <name>substrate</name>
    </ligand>
</feature>
<feature type="binding site" evidence="1">
    <location>
        <begin position="88"/>
        <end position="90"/>
    </location>
    <ligand>
        <name>ATP</name>
        <dbReference type="ChEBI" id="CHEBI:30616"/>
    </ligand>
</feature>
<feature type="binding site" evidence="1">
    <location>
        <position position="98"/>
    </location>
    <ligand>
        <name>ATP</name>
        <dbReference type="ChEBI" id="CHEBI:30616"/>
    </ligand>
</feature>
<feature type="binding site" evidence="1">
    <location>
        <begin position="123"/>
        <end position="129"/>
    </location>
    <ligand>
        <name>ATP</name>
        <dbReference type="ChEBI" id="CHEBI:30616"/>
    </ligand>
</feature>
<feature type="site" description="Transition state stabilizer" evidence="1">
    <location>
        <position position="17"/>
    </location>
</feature>
<gene>
    <name evidence="1" type="primary">coaD</name>
    <name type="ordered locus">Rmet_0285</name>
</gene>